<feature type="chain" id="PRO_0000192390" description="Shikimate kinase">
    <location>
        <begin position="1"/>
        <end position="162"/>
    </location>
</feature>
<feature type="binding site" evidence="1">
    <location>
        <begin position="10"/>
        <end position="15"/>
    </location>
    <ligand>
        <name>ATP</name>
        <dbReference type="ChEBI" id="CHEBI:30616"/>
    </ligand>
</feature>
<feature type="binding site" evidence="1">
    <location>
        <position position="14"/>
    </location>
    <ligand>
        <name>Mg(2+)</name>
        <dbReference type="ChEBI" id="CHEBI:18420"/>
    </ligand>
</feature>
<feature type="binding site" evidence="1">
    <location>
        <position position="28"/>
    </location>
    <ligand>
        <name>substrate</name>
    </ligand>
</feature>
<feature type="binding site" evidence="1">
    <location>
        <position position="52"/>
    </location>
    <ligand>
        <name>substrate</name>
    </ligand>
</feature>
<feature type="binding site" evidence="1">
    <location>
        <position position="73"/>
    </location>
    <ligand>
        <name>substrate</name>
    </ligand>
</feature>
<feature type="binding site" evidence="1">
    <location>
        <position position="113"/>
    </location>
    <ligand>
        <name>ATP</name>
        <dbReference type="ChEBI" id="CHEBI:30616"/>
    </ligand>
</feature>
<feature type="binding site" evidence="1">
    <location>
        <position position="129"/>
    </location>
    <ligand>
        <name>substrate</name>
    </ligand>
</feature>
<organism>
    <name type="scientific">Lactococcus lactis subsp. cremoris (strain MG1363)</name>
    <dbReference type="NCBI Taxonomy" id="416870"/>
    <lineage>
        <taxon>Bacteria</taxon>
        <taxon>Bacillati</taxon>
        <taxon>Bacillota</taxon>
        <taxon>Bacilli</taxon>
        <taxon>Lactobacillales</taxon>
        <taxon>Streptococcaceae</taxon>
        <taxon>Lactococcus</taxon>
        <taxon>Lactococcus cremoris subsp. cremoris</taxon>
    </lineage>
</organism>
<comment type="function">
    <text evidence="1">Catalyzes the specific phosphorylation of the 3-hydroxyl group of shikimic acid using ATP as a cosubstrate.</text>
</comment>
<comment type="catalytic activity">
    <reaction evidence="1">
        <text>shikimate + ATP = 3-phosphoshikimate + ADP + H(+)</text>
        <dbReference type="Rhea" id="RHEA:13121"/>
        <dbReference type="ChEBI" id="CHEBI:15378"/>
        <dbReference type="ChEBI" id="CHEBI:30616"/>
        <dbReference type="ChEBI" id="CHEBI:36208"/>
        <dbReference type="ChEBI" id="CHEBI:145989"/>
        <dbReference type="ChEBI" id="CHEBI:456216"/>
        <dbReference type="EC" id="2.7.1.71"/>
    </reaction>
</comment>
<comment type="cofactor">
    <cofactor evidence="1">
        <name>Mg(2+)</name>
        <dbReference type="ChEBI" id="CHEBI:18420"/>
    </cofactor>
    <text evidence="1">Binds 1 Mg(2+) ion per subunit.</text>
</comment>
<comment type="pathway">
    <text evidence="1">Metabolic intermediate biosynthesis; chorismate biosynthesis; chorismate from D-erythrose 4-phosphate and phosphoenolpyruvate: step 5/7.</text>
</comment>
<comment type="subunit">
    <text evidence="1">Monomer.</text>
</comment>
<comment type="subcellular location">
    <subcellularLocation>
        <location evidence="1">Cytoplasm</location>
    </subcellularLocation>
</comment>
<comment type="similarity">
    <text evidence="1">Belongs to the shikimate kinase family.</text>
</comment>
<accession>P43906</accession>
<accession>A2RMG4</accession>
<reference key="1">
    <citation type="journal article" date="1995" name="Mol. Gen. Genet.">
        <title>Genetic aspects of aromatic amino acid biosynthesis in Lactococcus lactis.</title>
        <authorList>
            <person name="Griffin H.G."/>
            <person name="Gasson M.J."/>
        </authorList>
    </citation>
    <scope>NUCLEOTIDE SEQUENCE [GENOMIC DNA]</scope>
    <source>
        <strain>MG1363 / F15876</strain>
    </source>
</reference>
<reference key="2">
    <citation type="journal article" date="2007" name="J. Bacteriol.">
        <title>The complete genome sequence of the lactic acid bacterial paradigm Lactococcus lactis subsp. cremoris MG1363.</title>
        <authorList>
            <person name="Wegmann U."/>
            <person name="O'Connell-Motherway M."/>
            <person name="Zomer A."/>
            <person name="Buist G."/>
            <person name="Shearman C."/>
            <person name="Canchaya C."/>
            <person name="Ventura M."/>
            <person name="Goesmann A."/>
            <person name="Gasson M.J."/>
            <person name="Kuipers O.P."/>
            <person name="van Sinderen D."/>
            <person name="Kok J."/>
        </authorList>
    </citation>
    <scope>NUCLEOTIDE SEQUENCE [LARGE SCALE GENOMIC DNA]</scope>
    <source>
        <strain>MG1363</strain>
    </source>
</reference>
<protein>
    <recommendedName>
        <fullName evidence="1">Shikimate kinase</fullName>
        <shortName evidence="1">SK</shortName>
        <ecNumber evidence="1">2.7.1.71</ecNumber>
    </recommendedName>
</protein>
<evidence type="ECO:0000255" key="1">
    <source>
        <dbReference type="HAMAP-Rule" id="MF_00109"/>
    </source>
</evidence>
<sequence>MSIILIGFMGAGKSTVAKLLAEEFTDLDKLIEEEIEMPIATFFELFGEADFRKIENEVFELAVQKDIIIATGGGIIENPKNLNVLDRASRVVFLTADFDTLWKRISMDWQNVRPLAQDKEAAQLLFEKRMKDYSLVADLTIDVTDKSPEQIAEQIREKWEIE</sequence>
<gene>
    <name evidence="1" type="primary">aroK</name>
    <name type="ordered locus">llmg_1925</name>
</gene>
<name>AROK_LACLM</name>
<dbReference type="EC" id="2.7.1.71" evidence="1"/>
<dbReference type="EMBL" id="X78413">
    <property type="protein sequence ID" value="CAA55181.1"/>
    <property type="molecule type" value="Genomic_DNA"/>
</dbReference>
<dbReference type="EMBL" id="AM406671">
    <property type="protein sequence ID" value="CAL98494.1"/>
    <property type="molecule type" value="Genomic_DNA"/>
</dbReference>
<dbReference type="PIR" id="S52581">
    <property type="entry name" value="S52581"/>
</dbReference>
<dbReference type="RefSeq" id="WP_011835673.1">
    <property type="nucleotide sequence ID" value="NC_009004.1"/>
</dbReference>
<dbReference type="SMR" id="P43906"/>
<dbReference type="STRING" id="416870.llmg_1925"/>
<dbReference type="KEGG" id="llm:llmg_1925"/>
<dbReference type="eggNOG" id="COG0703">
    <property type="taxonomic scope" value="Bacteria"/>
</dbReference>
<dbReference type="HOGENOM" id="CLU_057607_4_3_9"/>
<dbReference type="OrthoDB" id="9800332at2"/>
<dbReference type="PhylomeDB" id="P43906"/>
<dbReference type="UniPathway" id="UPA00053">
    <property type="reaction ID" value="UER00088"/>
</dbReference>
<dbReference type="Proteomes" id="UP000000364">
    <property type="component" value="Chromosome"/>
</dbReference>
<dbReference type="GO" id="GO:0005829">
    <property type="term" value="C:cytosol"/>
    <property type="evidence" value="ECO:0007669"/>
    <property type="project" value="TreeGrafter"/>
</dbReference>
<dbReference type="GO" id="GO:0005524">
    <property type="term" value="F:ATP binding"/>
    <property type="evidence" value="ECO:0007669"/>
    <property type="project" value="UniProtKB-UniRule"/>
</dbReference>
<dbReference type="GO" id="GO:0000287">
    <property type="term" value="F:magnesium ion binding"/>
    <property type="evidence" value="ECO:0007669"/>
    <property type="project" value="UniProtKB-UniRule"/>
</dbReference>
<dbReference type="GO" id="GO:0004765">
    <property type="term" value="F:shikimate kinase activity"/>
    <property type="evidence" value="ECO:0007669"/>
    <property type="project" value="UniProtKB-UniRule"/>
</dbReference>
<dbReference type="GO" id="GO:0008652">
    <property type="term" value="P:amino acid biosynthetic process"/>
    <property type="evidence" value="ECO:0007669"/>
    <property type="project" value="UniProtKB-KW"/>
</dbReference>
<dbReference type="GO" id="GO:0009073">
    <property type="term" value="P:aromatic amino acid family biosynthetic process"/>
    <property type="evidence" value="ECO:0007669"/>
    <property type="project" value="UniProtKB-KW"/>
</dbReference>
<dbReference type="GO" id="GO:0009423">
    <property type="term" value="P:chorismate biosynthetic process"/>
    <property type="evidence" value="ECO:0007669"/>
    <property type="project" value="UniProtKB-UniRule"/>
</dbReference>
<dbReference type="CDD" id="cd00464">
    <property type="entry name" value="SK"/>
    <property type="match status" value="1"/>
</dbReference>
<dbReference type="Gene3D" id="3.40.50.300">
    <property type="entry name" value="P-loop containing nucleotide triphosphate hydrolases"/>
    <property type="match status" value="1"/>
</dbReference>
<dbReference type="HAMAP" id="MF_00109">
    <property type="entry name" value="Shikimate_kinase"/>
    <property type="match status" value="1"/>
</dbReference>
<dbReference type="InterPro" id="IPR027417">
    <property type="entry name" value="P-loop_NTPase"/>
</dbReference>
<dbReference type="InterPro" id="IPR031322">
    <property type="entry name" value="Shikimate/glucono_kinase"/>
</dbReference>
<dbReference type="InterPro" id="IPR000623">
    <property type="entry name" value="Shikimate_kinase/TSH1"/>
</dbReference>
<dbReference type="InterPro" id="IPR023000">
    <property type="entry name" value="Shikimate_kinase_CS"/>
</dbReference>
<dbReference type="PANTHER" id="PTHR21087">
    <property type="entry name" value="SHIKIMATE KINASE"/>
    <property type="match status" value="1"/>
</dbReference>
<dbReference type="PANTHER" id="PTHR21087:SF16">
    <property type="entry name" value="SHIKIMATE KINASE 1, CHLOROPLASTIC"/>
    <property type="match status" value="1"/>
</dbReference>
<dbReference type="Pfam" id="PF01202">
    <property type="entry name" value="SKI"/>
    <property type="match status" value="1"/>
</dbReference>
<dbReference type="PRINTS" id="PR01100">
    <property type="entry name" value="SHIKIMTKNASE"/>
</dbReference>
<dbReference type="SUPFAM" id="SSF52540">
    <property type="entry name" value="P-loop containing nucleoside triphosphate hydrolases"/>
    <property type="match status" value="1"/>
</dbReference>
<dbReference type="PROSITE" id="PS01128">
    <property type="entry name" value="SHIKIMATE_KINASE"/>
    <property type="match status" value="1"/>
</dbReference>
<keyword id="KW-0028">Amino-acid biosynthesis</keyword>
<keyword id="KW-0057">Aromatic amino acid biosynthesis</keyword>
<keyword id="KW-0067">ATP-binding</keyword>
<keyword id="KW-0963">Cytoplasm</keyword>
<keyword id="KW-0418">Kinase</keyword>
<keyword id="KW-0460">Magnesium</keyword>
<keyword id="KW-0479">Metal-binding</keyword>
<keyword id="KW-0547">Nucleotide-binding</keyword>
<keyword id="KW-0808">Transferase</keyword>
<proteinExistence type="inferred from homology"/>